<proteinExistence type="evidence at transcript level"/>
<name>S22AK_HUMAN</name>
<feature type="chain" id="PRO_0000326428" description="Solute carrier family 22 member 20">
    <location>
        <begin position="1"/>
        <end position="555"/>
    </location>
</feature>
<feature type="topological domain" description="Cytoplasmic" evidence="2">
    <location>
        <begin position="1"/>
        <end position="23"/>
    </location>
</feature>
<feature type="transmembrane region" description="Helical" evidence="2">
    <location>
        <begin position="24"/>
        <end position="44"/>
    </location>
</feature>
<feature type="topological domain" description="Extracellular" evidence="2">
    <location>
        <begin position="45"/>
        <end position="137"/>
    </location>
</feature>
<feature type="transmembrane region" description="Helical" evidence="2">
    <location>
        <begin position="138"/>
        <end position="158"/>
    </location>
</feature>
<feature type="topological domain" description="Cytoplasmic" evidence="2">
    <location>
        <begin position="159"/>
        <end position="166"/>
    </location>
</feature>
<feature type="transmembrane region" description="Helical" evidence="2">
    <location>
        <begin position="167"/>
        <end position="187"/>
    </location>
</feature>
<feature type="topological domain" description="Extracellular" evidence="2">
    <location>
        <begin position="188"/>
        <end position="194"/>
    </location>
</feature>
<feature type="transmembrane region" description="Helical" evidence="2">
    <location>
        <begin position="195"/>
        <end position="215"/>
    </location>
</feature>
<feature type="topological domain" description="Cytoplasmic" evidence="2">
    <location>
        <begin position="216"/>
        <end position="225"/>
    </location>
</feature>
<feature type="transmembrane region" description="Helical" evidence="2">
    <location>
        <begin position="226"/>
        <end position="246"/>
    </location>
</feature>
<feature type="topological domain" description="Extracellular" evidence="2">
    <location>
        <begin position="247"/>
        <end position="250"/>
    </location>
</feature>
<feature type="transmembrane region" description="Helical" evidence="2">
    <location>
        <begin position="251"/>
        <end position="271"/>
    </location>
</feature>
<feature type="topological domain" description="Cytoplasmic" evidence="2">
    <location>
        <begin position="272"/>
        <end position="339"/>
    </location>
</feature>
<feature type="transmembrane region" description="Helical" evidence="2">
    <location>
        <begin position="340"/>
        <end position="360"/>
    </location>
</feature>
<feature type="topological domain" description="Extracellular" evidence="2">
    <location>
        <begin position="361"/>
        <end position="373"/>
    </location>
</feature>
<feature type="transmembrane region" description="Helical" evidence="2">
    <location>
        <begin position="374"/>
        <end position="394"/>
    </location>
</feature>
<feature type="topological domain" description="Cytoplasmic" evidence="2">
    <location>
        <begin position="395"/>
        <end position="397"/>
    </location>
</feature>
<feature type="transmembrane region" description="Helical" evidence="2">
    <location>
        <begin position="398"/>
        <end position="418"/>
    </location>
</feature>
<feature type="topological domain" description="Extracellular" evidence="2">
    <location>
        <begin position="419"/>
        <end position="429"/>
    </location>
</feature>
<feature type="transmembrane region" description="Helical" evidence="2">
    <location>
        <begin position="430"/>
        <end position="450"/>
    </location>
</feature>
<feature type="topological domain" description="Cytoplasmic" evidence="2">
    <location>
        <begin position="451"/>
        <end position="485"/>
    </location>
</feature>
<feature type="transmembrane region" description="Helical" evidence="2">
    <location>
        <begin position="486"/>
        <end position="506"/>
    </location>
</feature>
<feature type="topological domain" description="Extracellular" evidence="2">
    <location>
        <begin position="507"/>
        <end position="555"/>
    </location>
</feature>
<feature type="region of interest" description="Disordered" evidence="3">
    <location>
        <begin position="526"/>
        <end position="555"/>
    </location>
</feature>
<feature type="compositionally biased region" description="Basic and acidic residues" evidence="3">
    <location>
        <begin position="526"/>
        <end position="540"/>
    </location>
</feature>
<feature type="glycosylation site" description="N-linked (GlcNAc...) asparagine" evidence="2">
    <location>
        <position position="54"/>
    </location>
</feature>
<feature type="glycosylation site" description="N-linked (GlcNAc...) asparagine" evidence="2">
    <location>
        <position position="114"/>
    </location>
</feature>
<feature type="splice variant" id="VSP_032653" description="In isoform 2." evidence="4 5">
    <original>VEWMPTRGRTVAGILLGYSFTLGQLILAGVAYLIRPWRCLQFAISAPFLIFFLYSWWLPESSRWLLLHGKSQLAVQNLQKVAAMNGRKEEGERLTKEVMSSYIQSEFASVCTSNSILDLFRTPAIRKVTCCLMVI</original>
    <variation>ASRVIPLAPPAWQVPVSCTESAEGGCNEREEGGRGKADQGGDELLHPKRVCKCLHLQLNLGPLPNPGHPQGHMLSHGDLRGRQRSSGSGEQGGSCEPESRNGRLPAVAPAGLGLPFVHLPLSAREKQILSSKFQS</variation>
    <location>
        <begin position="213"/>
        <end position="347"/>
    </location>
</feature>
<feature type="splice variant" id="VSP_032654" description="In isoform 2." evidence="4 5">
    <location>
        <begin position="348"/>
        <end position="555"/>
    </location>
</feature>
<feature type="sequence variant" id="VAR_040065" description="In dbSNP:rs11605576.">
    <original>A</original>
    <variation>D</variation>
    <location>
        <position position="58"/>
    </location>
</feature>
<feature type="sequence variant" id="VAR_040066" description="In dbSNP:rs12420456.">
    <original>A</original>
    <variation>V</variation>
    <location>
        <position position="139"/>
    </location>
</feature>
<organism>
    <name type="scientific">Homo sapiens</name>
    <name type="common">Human</name>
    <dbReference type="NCBI Taxonomy" id="9606"/>
    <lineage>
        <taxon>Eukaryota</taxon>
        <taxon>Metazoa</taxon>
        <taxon>Chordata</taxon>
        <taxon>Craniata</taxon>
        <taxon>Vertebrata</taxon>
        <taxon>Euteleostomi</taxon>
        <taxon>Mammalia</taxon>
        <taxon>Eutheria</taxon>
        <taxon>Euarchontoglires</taxon>
        <taxon>Primates</taxon>
        <taxon>Haplorrhini</taxon>
        <taxon>Catarrhini</taxon>
        <taxon>Hominidae</taxon>
        <taxon>Homo</taxon>
    </lineage>
</organism>
<protein>
    <recommendedName>
        <fullName>Solute carrier family 22 member 20</fullName>
    </recommendedName>
    <alternativeName>
        <fullName>Organic anion transporter 6</fullName>
    </alternativeName>
    <alternativeName>
        <fullName evidence="7">Solute carrier family 22 member 20 pseudogene</fullName>
    </alternativeName>
</protein>
<reference key="1">
    <citation type="journal article" date="2004" name="Nat. Genet.">
        <title>Complete sequencing and characterization of 21,243 full-length human cDNAs.</title>
        <authorList>
            <person name="Ota T."/>
            <person name="Suzuki Y."/>
            <person name="Nishikawa T."/>
            <person name="Otsuki T."/>
            <person name="Sugiyama T."/>
            <person name="Irie R."/>
            <person name="Wakamatsu A."/>
            <person name="Hayashi K."/>
            <person name="Sato H."/>
            <person name="Nagai K."/>
            <person name="Kimura K."/>
            <person name="Makita H."/>
            <person name="Sekine M."/>
            <person name="Obayashi M."/>
            <person name="Nishi T."/>
            <person name="Shibahara T."/>
            <person name="Tanaka T."/>
            <person name="Ishii S."/>
            <person name="Yamamoto J."/>
            <person name="Saito K."/>
            <person name="Kawai Y."/>
            <person name="Isono Y."/>
            <person name="Nakamura Y."/>
            <person name="Nagahari K."/>
            <person name="Murakami K."/>
            <person name="Yasuda T."/>
            <person name="Iwayanagi T."/>
            <person name="Wagatsuma M."/>
            <person name="Shiratori A."/>
            <person name="Sudo H."/>
            <person name="Hosoiri T."/>
            <person name="Kaku Y."/>
            <person name="Kodaira H."/>
            <person name="Kondo H."/>
            <person name="Sugawara M."/>
            <person name="Takahashi M."/>
            <person name="Kanda K."/>
            <person name="Yokoi T."/>
            <person name="Furuya T."/>
            <person name="Kikkawa E."/>
            <person name="Omura Y."/>
            <person name="Abe K."/>
            <person name="Kamihara K."/>
            <person name="Katsuta N."/>
            <person name="Sato K."/>
            <person name="Tanikawa M."/>
            <person name="Yamazaki M."/>
            <person name="Ninomiya K."/>
            <person name="Ishibashi T."/>
            <person name="Yamashita H."/>
            <person name="Murakawa K."/>
            <person name="Fujimori K."/>
            <person name="Tanai H."/>
            <person name="Kimata M."/>
            <person name="Watanabe M."/>
            <person name="Hiraoka S."/>
            <person name="Chiba Y."/>
            <person name="Ishida S."/>
            <person name="Ono Y."/>
            <person name="Takiguchi S."/>
            <person name="Watanabe S."/>
            <person name="Yosida M."/>
            <person name="Hotuta T."/>
            <person name="Kusano J."/>
            <person name="Kanehori K."/>
            <person name="Takahashi-Fujii A."/>
            <person name="Hara H."/>
            <person name="Tanase T.-O."/>
            <person name="Nomura Y."/>
            <person name="Togiya S."/>
            <person name="Komai F."/>
            <person name="Hara R."/>
            <person name="Takeuchi K."/>
            <person name="Arita M."/>
            <person name="Imose N."/>
            <person name="Musashino K."/>
            <person name="Yuuki H."/>
            <person name="Oshima A."/>
            <person name="Sasaki N."/>
            <person name="Aotsuka S."/>
            <person name="Yoshikawa Y."/>
            <person name="Matsunawa H."/>
            <person name="Ichihara T."/>
            <person name="Shiohata N."/>
            <person name="Sano S."/>
            <person name="Moriya S."/>
            <person name="Momiyama H."/>
            <person name="Satoh N."/>
            <person name="Takami S."/>
            <person name="Terashima Y."/>
            <person name="Suzuki O."/>
            <person name="Nakagawa S."/>
            <person name="Senoh A."/>
            <person name="Mizoguchi H."/>
            <person name="Goto Y."/>
            <person name="Shimizu F."/>
            <person name="Wakebe H."/>
            <person name="Hishigaki H."/>
            <person name="Watanabe T."/>
            <person name="Sugiyama A."/>
            <person name="Takemoto M."/>
            <person name="Kawakami B."/>
            <person name="Yamazaki M."/>
            <person name="Watanabe K."/>
            <person name="Kumagai A."/>
            <person name="Itakura S."/>
            <person name="Fukuzumi Y."/>
            <person name="Fujimori Y."/>
            <person name="Komiyama M."/>
            <person name="Tashiro H."/>
            <person name="Tanigami A."/>
            <person name="Fujiwara T."/>
            <person name="Ono T."/>
            <person name="Yamada K."/>
            <person name="Fujii Y."/>
            <person name="Ozaki K."/>
            <person name="Hirao M."/>
            <person name="Ohmori Y."/>
            <person name="Kawabata A."/>
            <person name="Hikiji T."/>
            <person name="Kobatake N."/>
            <person name="Inagaki H."/>
            <person name="Ikema Y."/>
            <person name="Okamoto S."/>
            <person name="Okitani R."/>
            <person name="Kawakami T."/>
            <person name="Noguchi S."/>
            <person name="Itoh T."/>
            <person name="Shigeta K."/>
            <person name="Senba T."/>
            <person name="Matsumura K."/>
            <person name="Nakajima Y."/>
            <person name="Mizuno T."/>
            <person name="Morinaga M."/>
            <person name="Sasaki M."/>
            <person name="Togashi T."/>
            <person name="Oyama M."/>
            <person name="Hata H."/>
            <person name="Watanabe M."/>
            <person name="Komatsu T."/>
            <person name="Mizushima-Sugano J."/>
            <person name="Satoh T."/>
            <person name="Shirai Y."/>
            <person name="Takahashi Y."/>
            <person name="Nakagawa K."/>
            <person name="Okumura K."/>
            <person name="Nagase T."/>
            <person name="Nomura N."/>
            <person name="Kikuchi H."/>
            <person name="Masuho Y."/>
            <person name="Yamashita R."/>
            <person name="Nakai K."/>
            <person name="Yada T."/>
            <person name="Nakamura Y."/>
            <person name="Ohara O."/>
            <person name="Isogai T."/>
            <person name="Sugano S."/>
        </authorList>
    </citation>
    <scope>NUCLEOTIDE SEQUENCE [LARGE SCALE MRNA] (ISOFORM 2)</scope>
    <source>
        <tissue>Synovium</tissue>
    </source>
</reference>
<reference key="2">
    <citation type="journal article" date="2006" name="Nature">
        <title>Human chromosome 11 DNA sequence and analysis including novel gene identification.</title>
        <authorList>
            <person name="Taylor T.D."/>
            <person name="Noguchi H."/>
            <person name="Totoki Y."/>
            <person name="Toyoda A."/>
            <person name="Kuroki Y."/>
            <person name="Dewar K."/>
            <person name="Lloyd C."/>
            <person name="Itoh T."/>
            <person name="Takeda T."/>
            <person name="Kim D.-W."/>
            <person name="She X."/>
            <person name="Barlow K.F."/>
            <person name="Bloom T."/>
            <person name="Bruford E."/>
            <person name="Chang J.L."/>
            <person name="Cuomo C.A."/>
            <person name="Eichler E."/>
            <person name="FitzGerald M.G."/>
            <person name="Jaffe D.B."/>
            <person name="LaButti K."/>
            <person name="Nicol R."/>
            <person name="Park H.-S."/>
            <person name="Seaman C."/>
            <person name="Sougnez C."/>
            <person name="Yang X."/>
            <person name="Zimmer A.R."/>
            <person name="Zody M.C."/>
            <person name="Birren B.W."/>
            <person name="Nusbaum C."/>
            <person name="Fujiyama A."/>
            <person name="Hattori M."/>
            <person name="Rogers J."/>
            <person name="Lander E.S."/>
            <person name="Sakaki Y."/>
        </authorList>
    </citation>
    <scope>NUCLEOTIDE SEQUENCE [LARGE SCALE GENOMIC DNA]</scope>
</reference>
<reference key="3">
    <citation type="journal article" date="2004" name="Genome Res.">
        <title>The status, quality, and expansion of the NIH full-length cDNA project: the Mammalian Gene Collection (MGC).</title>
        <authorList>
            <consortium name="The MGC Project Team"/>
        </authorList>
    </citation>
    <scope>NUCLEOTIDE SEQUENCE [LARGE SCALE MRNA] (ISOFORM 2)</scope>
</reference>
<keyword id="KW-0025">Alternative splicing</keyword>
<keyword id="KW-0325">Glycoprotein</keyword>
<keyword id="KW-0406">Ion transport</keyword>
<keyword id="KW-0472">Membrane</keyword>
<keyword id="KW-1185">Reference proteome</keyword>
<keyword id="KW-0812">Transmembrane</keyword>
<keyword id="KW-1133">Transmembrane helix</keyword>
<keyword id="KW-0813">Transport</keyword>
<sequence>MAFTDLLDALGSMGRFQLNHTALLLLPCGLLACHNFLQNFTAAVPPHHCRGPANHTEASTNDSGAWLRATIPLDQLGAPEPCRRFTKPQWALLSPNSSIPGAATEGCKDGWVYNRSVFPSTIVMEWDLVCEARTLRDLAQSVYMAGVLVGAAVFGSLADRLGCKGPLVWSYLQLAASGAATAYFSSFSAYCVFRFLMGMTFSGIILNSVSLVVEWMPTRGRTVAGILLGYSFTLGQLILAGVAYLIRPWRCLQFAISAPFLIFFLYSWWLPESSRWLLLHGKSQLAVQNLQKVAAMNGRKEEGERLTKEVMSSYIQSEFASVCTSNSILDLFRTPAIRKVTCCLMVIWFSNSVAYYGLAMDLQKFGLSLYLVQALFGIINTPAMLVATATMIYVGRRATVASFLILAGLMVIANMFVPEGTQILCTAQAALGKGCLASSFICVYLFTGELYPTEIRQMGMGFASVHARLGGLTAPLVTTLGEYSTILPPVSFGATAILAGLAVCVLTETRNMPLVETIAAMERRVKEGSSKKHVEEKSEEISLQQLRASPLKETI</sequence>
<accession>A6NK97</accession>
<accession>B9EJB2</accession>
<accession>Q6ZN88</accession>
<comment type="function">
    <text evidence="1">Organic anion transporter that mediates the uptake of estrone sulfate. Inhibited by probenecid, propionate, 2-methylbutyrate, 3-methylbutyrate, benzoate, heptanoate and 2-ethylhaxanoate. May act as an odorant transporter (By similarity).</text>
</comment>
<comment type="subcellular location">
    <subcellularLocation>
        <location evidence="6">Membrane</location>
        <topology evidence="6">Multi-pass membrane protein</topology>
    </subcellularLocation>
</comment>
<comment type="alternative products">
    <event type="alternative splicing"/>
    <isoform>
        <id>A6NK97-1</id>
        <name>1</name>
        <sequence type="displayed"/>
    </isoform>
    <isoform>
        <id>A6NK97-2</id>
        <name>2</name>
        <sequence type="described" ref="VSP_032653 VSP_032654"/>
    </isoform>
</comment>
<comment type="similarity">
    <text evidence="6">Belongs to the major facilitator (TC 2.A.1) superfamily. Organic cation transporter (TC 2.A.1.19) family.</text>
</comment>
<comment type="sequence caution" evidence="6">
    <conflict type="erroneous initiation">
        <sequence resource="EMBL-CDS" id="BAD18487"/>
    </conflict>
</comment>
<evidence type="ECO:0000250" key="1"/>
<evidence type="ECO:0000255" key="2"/>
<evidence type="ECO:0000256" key="3">
    <source>
        <dbReference type="SAM" id="MobiDB-lite"/>
    </source>
</evidence>
<evidence type="ECO:0000303" key="4">
    <source>
    </source>
</evidence>
<evidence type="ECO:0000303" key="5">
    <source>
    </source>
</evidence>
<evidence type="ECO:0000305" key="6"/>
<evidence type="ECO:0000312" key="7">
    <source>
        <dbReference type="HGNC" id="HGNC:29867"/>
    </source>
</evidence>
<dbReference type="EMBL" id="AK131327">
    <property type="protein sequence ID" value="BAD18487.1"/>
    <property type="status" value="ALT_INIT"/>
    <property type="molecule type" value="mRNA"/>
</dbReference>
<dbReference type="EMBL" id="AP003068">
    <property type="status" value="NOT_ANNOTATED_CDS"/>
    <property type="molecule type" value="Genomic_DNA"/>
</dbReference>
<dbReference type="EMBL" id="BC146850">
    <property type="protein sequence ID" value="AAI46851.1"/>
    <property type="molecule type" value="mRNA"/>
</dbReference>
<dbReference type="RefSeq" id="NP_001004326.4">
    <property type="nucleotide sequence ID" value="NM_001004326.4"/>
</dbReference>
<dbReference type="SMR" id="A6NK97"/>
<dbReference type="BioGRID" id="136241">
    <property type="interactions" value="1"/>
</dbReference>
<dbReference type="FunCoup" id="A6NK97">
    <property type="interactions" value="52"/>
</dbReference>
<dbReference type="IntAct" id="A6NK97">
    <property type="interactions" value="2"/>
</dbReference>
<dbReference type="MINT" id="A6NK97"/>
<dbReference type="TCDB" id="2.A.1.19.35">
    <property type="family name" value="the major facilitator superfamily (mfs)"/>
</dbReference>
<dbReference type="GlyCosmos" id="A6NK97">
    <property type="glycosylation" value="2 sites, No reported glycans"/>
</dbReference>
<dbReference type="GlyGen" id="A6NK97">
    <property type="glycosylation" value="2 sites"/>
</dbReference>
<dbReference type="iPTMnet" id="A6NK97"/>
<dbReference type="PhosphoSitePlus" id="A6NK97"/>
<dbReference type="BioMuta" id="HGNC:29867"/>
<dbReference type="MassIVE" id="A6NK97"/>
<dbReference type="AGR" id="HGNC:29867"/>
<dbReference type="GeneCards" id="SLC22A20P"/>
<dbReference type="HGNC" id="HGNC:29867">
    <property type="gene designation" value="SLC22A20P"/>
</dbReference>
<dbReference type="MIM" id="611696">
    <property type="type" value="gene"/>
</dbReference>
<dbReference type="neXtProt" id="NX_A6NK97"/>
<dbReference type="InParanoid" id="A6NK97"/>
<dbReference type="PAN-GO" id="A6NK97">
    <property type="GO annotations" value="0 GO annotations based on evolutionary models"/>
</dbReference>
<dbReference type="PhylomeDB" id="A6NK97"/>
<dbReference type="PathwayCommons" id="A6NK97"/>
<dbReference type="SignaLink" id="A6NK97"/>
<dbReference type="BioGRID-ORCS" id="440044">
    <property type="hits" value="13 hits in 241 CRISPR screens"/>
</dbReference>
<dbReference type="GenomeRNAi" id="440044"/>
<dbReference type="Pharos" id="A6NK97">
    <property type="development level" value="Tdark"/>
</dbReference>
<dbReference type="PRO" id="PR:A6NK97"/>
<dbReference type="Proteomes" id="UP000005640">
    <property type="component" value="Unplaced"/>
</dbReference>
<dbReference type="RNAct" id="A6NK97">
    <property type="molecule type" value="protein"/>
</dbReference>
<dbReference type="GO" id="GO:0016020">
    <property type="term" value="C:membrane"/>
    <property type="evidence" value="ECO:0007669"/>
    <property type="project" value="UniProtKB-SubCell"/>
</dbReference>
<dbReference type="GO" id="GO:0022857">
    <property type="term" value="F:transmembrane transporter activity"/>
    <property type="evidence" value="ECO:0007669"/>
    <property type="project" value="InterPro"/>
</dbReference>
<dbReference type="GO" id="GO:0006811">
    <property type="term" value="P:monoatomic ion transport"/>
    <property type="evidence" value="ECO:0007669"/>
    <property type="project" value="UniProtKB-KW"/>
</dbReference>
<dbReference type="GO" id="GO:0015711">
    <property type="term" value="P:organic anion transport"/>
    <property type="evidence" value="ECO:0000318"/>
    <property type="project" value="GO_Central"/>
</dbReference>
<dbReference type="CDD" id="cd17446">
    <property type="entry name" value="MFS_SLC22A6_OAT1_like"/>
    <property type="match status" value="1"/>
</dbReference>
<dbReference type="FunFam" id="1.20.1250.20:FF:000023">
    <property type="entry name" value="Solute carrier family 22 member 6"/>
    <property type="match status" value="1"/>
</dbReference>
<dbReference type="Gene3D" id="1.20.1250.20">
    <property type="entry name" value="MFS general substrate transporter like domains"/>
    <property type="match status" value="1"/>
</dbReference>
<dbReference type="InterPro" id="IPR020846">
    <property type="entry name" value="MFS_dom"/>
</dbReference>
<dbReference type="InterPro" id="IPR005828">
    <property type="entry name" value="MFS_sugar_transport-like"/>
</dbReference>
<dbReference type="InterPro" id="IPR036259">
    <property type="entry name" value="MFS_trans_sf"/>
</dbReference>
<dbReference type="PANTHER" id="PTHR24064">
    <property type="entry name" value="SOLUTE CARRIER FAMILY 22 MEMBER"/>
    <property type="match status" value="1"/>
</dbReference>
<dbReference type="Pfam" id="PF00083">
    <property type="entry name" value="Sugar_tr"/>
    <property type="match status" value="1"/>
</dbReference>
<dbReference type="SUPFAM" id="SSF103473">
    <property type="entry name" value="MFS general substrate transporter"/>
    <property type="match status" value="1"/>
</dbReference>
<dbReference type="PROSITE" id="PS50850">
    <property type="entry name" value="MFS"/>
    <property type="match status" value="1"/>
</dbReference>
<gene>
    <name evidence="7" type="primary">SLC22A20P</name>
    <name type="synonym">OAT6</name>
    <name type="synonym">SLC22A20</name>
</gene>